<dbReference type="EMBL" id="AE000782">
    <property type="protein sequence ID" value="AAB89265.1"/>
    <property type="molecule type" value="Genomic_DNA"/>
</dbReference>
<dbReference type="PIR" id="A69499">
    <property type="entry name" value="A69499"/>
</dbReference>
<dbReference type="STRING" id="224325.AF_1994"/>
<dbReference type="PaxDb" id="224325-AF_1994"/>
<dbReference type="EnsemblBacteria" id="AAB89265">
    <property type="protein sequence ID" value="AAB89265"/>
    <property type="gene ID" value="AF_1994"/>
</dbReference>
<dbReference type="KEGG" id="afu:AF_1994"/>
<dbReference type="eggNOG" id="arCOG06146">
    <property type="taxonomic scope" value="Archaea"/>
</dbReference>
<dbReference type="HOGENOM" id="CLU_1202569_0_0_2"/>
<dbReference type="Proteomes" id="UP000002199">
    <property type="component" value="Chromosome"/>
</dbReference>
<dbReference type="PROSITE" id="PS51257">
    <property type="entry name" value="PROKAR_LIPOPROTEIN"/>
    <property type="match status" value="1"/>
</dbReference>
<protein>
    <recommendedName>
        <fullName>Uncharacterized protein AF_1994</fullName>
    </recommendedName>
</protein>
<keyword id="KW-1185">Reference proteome</keyword>
<keyword id="KW-0732">Signal</keyword>
<feature type="signal peptide" evidence="1">
    <location>
        <begin position="1"/>
        <end position="29"/>
    </location>
</feature>
<feature type="chain" id="PRO_0000013677" description="Uncharacterized protein AF_1994">
    <location>
        <begin position="30"/>
        <end position="236"/>
    </location>
</feature>
<name>Y1994_ARCFU</name>
<reference key="1">
    <citation type="journal article" date="1997" name="Nature">
        <title>The complete genome sequence of the hyperthermophilic, sulphate-reducing archaeon Archaeoglobus fulgidus.</title>
        <authorList>
            <person name="Klenk H.-P."/>
            <person name="Clayton R.A."/>
            <person name="Tomb J.-F."/>
            <person name="White O."/>
            <person name="Nelson K.E."/>
            <person name="Ketchum K.A."/>
            <person name="Dodson R.J."/>
            <person name="Gwinn M.L."/>
            <person name="Hickey E.K."/>
            <person name="Peterson J.D."/>
            <person name="Richardson D.L."/>
            <person name="Kerlavage A.R."/>
            <person name="Graham D.E."/>
            <person name="Kyrpides N.C."/>
            <person name="Fleischmann R.D."/>
            <person name="Quackenbush J."/>
            <person name="Lee N.H."/>
            <person name="Sutton G.G."/>
            <person name="Gill S.R."/>
            <person name="Kirkness E.F."/>
            <person name="Dougherty B.A."/>
            <person name="McKenney K."/>
            <person name="Adams M.D."/>
            <person name="Loftus B.J."/>
            <person name="Peterson S.N."/>
            <person name="Reich C.I."/>
            <person name="McNeil L.K."/>
            <person name="Badger J.H."/>
            <person name="Glodek A."/>
            <person name="Zhou L."/>
            <person name="Overbeek R."/>
            <person name="Gocayne J.D."/>
            <person name="Weidman J.F."/>
            <person name="McDonald L.A."/>
            <person name="Utterback T.R."/>
            <person name="Cotton M.D."/>
            <person name="Spriggs T."/>
            <person name="Artiach P."/>
            <person name="Kaine B.P."/>
            <person name="Sykes S.M."/>
            <person name="Sadow P.W."/>
            <person name="D'Andrea K.P."/>
            <person name="Bowman C."/>
            <person name="Fujii C."/>
            <person name="Garland S.A."/>
            <person name="Mason T.M."/>
            <person name="Olsen G.J."/>
            <person name="Fraser C.M."/>
            <person name="Smith H.O."/>
            <person name="Woese C.R."/>
            <person name="Venter J.C."/>
        </authorList>
    </citation>
    <scope>NUCLEOTIDE SEQUENCE [LARGE SCALE GENOMIC DNA]</scope>
    <source>
        <strain>ATCC 49558 / DSM 4304 / JCM 9628 / NBRC 100126 / VC-16</strain>
    </source>
</reference>
<sequence length="236" mass="26339">MKGGDKMKKLILLMLLLPISLIGCTDEESSVTVGHTTVYYTNVPDAKAEVLAGYLQEEFGFTSDTDILLSMSGNEYEVRIPSSYSSPSEVEESFKVYFALLASRVSEEVFFGSPVKLVLVTHQNDELFAVKNQYSFEKAGRVFVYFKGVDREQAFNLANYLESLVGENYDWDVIFEQSEGVYHVVPFVGINDASELTPEMENSYQSMATELEDVLGGDVVVHLVNFEGYEVAAFEG</sequence>
<proteinExistence type="inferred from homology"/>
<gene>
    <name type="ordered locus">AF_1994</name>
</gene>
<accession>O28285</accession>
<evidence type="ECO:0000255" key="1">
    <source>
        <dbReference type="PROSITE-ProRule" id="PRU00303"/>
    </source>
</evidence>
<organism>
    <name type="scientific">Archaeoglobus fulgidus (strain ATCC 49558 / DSM 4304 / JCM 9628 / NBRC 100126 / VC-16)</name>
    <dbReference type="NCBI Taxonomy" id="224325"/>
    <lineage>
        <taxon>Archaea</taxon>
        <taxon>Methanobacteriati</taxon>
        <taxon>Methanobacteriota</taxon>
        <taxon>Archaeoglobi</taxon>
        <taxon>Archaeoglobales</taxon>
        <taxon>Archaeoglobaceae</taxon>
        <taxon>Archaeoglobus</taxon>
    </lineage>
</organism>